<sequence length="312" mass="33967">MALRPEDPSSGFRHGNVVAFIIEKMARHTKGPEFYFENISLSWEEVEDKLRAILEDSEVPSEVKEACTWGSLALGVRFAHRQGQLQNRRVQWLQGFAKLHRSAALVLASNLTELKEQQEMECNEATFQLQLTETSLAEVQRERDMLRWKLFHAELAPPQGQGQATVFPGLATAGGDWTEGAGEQEKEAVAAAGAAGGKGEERYAEAGPAPAEVLQGLGGGFRQPLGAIVAGKLHLCGAEGERSQVSTNSHVCLLWAWVHSLTGASSCPAPYLIHILIPMPFVRLLSHTQYTPFTSKGHRTGSNSDAFQLGGL</sequence>
<gene>
    <name type="primary">TEX13B</name>
</gene>
<feature type="chain" id="PRO_0000065701" description="Testis-expressed protein 13B">
    <location>
        <begin position="1"/>
        <end position="312"/>
    </location>
</feature>
<reference key="1">
    <citation type="journal article" date="2001" name="Nat. Genet.">
        <title>An abundance of X-linked genes expressed in spermatogonia.</title>
        <authorList>
            <person name="Wang P.J."/>
            <person name="McCarrey J.R."/>
            <person name="Yang F."/>
            <person name="Page D.C."/>
        </authorList>
    </citation>
    <scope>NUCLEOTIDE SEQUENCE [MRNA]</scope>
    <source>
        <tissue>Testis</tissue>
    </source>
</reference>
<reference key="2">
    <citation type="journal article" date="2005" name="Nature">
        <title>The DNA sequence of the human X chromosome.</title>
        <authorList>
            <person name="Ross M.T."/>
            <person name="Grafham D.V."/>
            <person name="Coffey A.J."/>
            <person name="Scherer S."/>
            <person name="McLay K."/>
            <person name="Muzny D."/>
            <person name="Platzer M."/>
            <person name="Howell G.R."/>
            <person name="Burrows C."/>
            <person name="Bird C.P."/>
            <person name="Frankish A."/>
            <person name="Lovell F.L."/>
            <person name="Howe K.L."/>
            <person name="Ashurst J.L."/>
            <person name="Fulton R.S."/>
            <person name="Sudbrak R."/>
            <person name="Wen G."/>
            <person name="Jones M.C."/>
            <person name="Hurles M.E."/>
            <person name="Andrews T.D."/>
            <person name="Scott C.E."/>
            <person name="Searle S."/>
            <person name="Ramser J."/>
            <person name="Whittaker A."/>
            <person name="Deadman R."/>
            <person name="Carter N.P."/>
            <person name="Hunt S.E."/>
            <person name="Chen R."/>
            <person name="Cree A."/>
            <person name="Gunaratne P."/>
            <person name="Havlak P."/>
            <person name="Hodgson A."/>
            <person name="Metzker M.L."/>
            <person name="Richards S."/>
            <person name="Scott G."/>
            <person name="Steffen D."/>
            <person name="Sodergren E."/>
            <person name="Wheeler D.A."/>
            <person name="Worley K.C."/>
            <person name="Ainscough R."/>
            <person name="Ambrose K.D."/>
            <person name="Ansari-Lari M.A."/>
            <person name="Aradhya S."/>
            <person name="Ashwell R.I."/>
            <person name="Babbage A.K."/>
            <person name="Bagguley C.L."/>
            <person name="Ballabio A."/>
            <person name="Banerjee R."/>
            <person name="Barker G.E."/>
            <person name="Barlow K.F."/>
            <person name="Barrett I.P."/>
            <person name="Bates K.N."/>
            <person name="Beare D.M."/>
            <person name="Beasley H."/>
            <person name="Beasley O."/>
            <person name="Beck A."/>
            <person name="Bethel G."/>
            <person name="Blechschmidt K."/>
            <person name="Brady N."/>
            <person name="Bray-Allen S."/>
            <person name="Bridgeman A.M."/>
            <person name="Brown A.J."/>
            <person name="Brown M.J."/>
            <person name="Bonnin D."/>
            <person name="Bruford E.A."/>
            <person name="Buhay C."/>
            <person name="Burch P."/>
            <person name="Burford D."/>
            <person name="Burgess J."/>
            <person name="Burrill W."/>
            <person name="Burton J."/>
            <person name="Bye J.M."/>
            <person name="Carder C."/>
            <person name="Carrel L."/>
            <person name="Chako J."/>
            <person name="Chapman J.C."/>
            <person name="Chavez D."/>
            <person name="Chen E."/>
            <person name="Chen G."/>
            <person name="Chen Y."/>
            <person name="Chen Z."/>
            <person name="Chinault C."/>
            <person name="Ciccodicola A."/>
            <person name="Clark S.Y."/>
            <person name="Clarke G."/>
            <person name="Clee C.M."/>
            <person name="Clegg S."/>
            <person name="Clerc-Blankenburg K."/>
            <person name="Clifford K."/>
            <person name="Cobley V."/>
            <person name="Cole C.G."/>
            <person name="Conquer J.S."/>
            <person name="Corby N."/>
            <person name="Connor R.E."/>
            <person name="David R."/>
            <person name="Davies J."/>
            <person name="Davis C."/>
            <person name="Davis J."/>
            <person name="Delgado O."/>
            <person name="Deshazo D."/>
            <person name="Dhami P."/>
            <person name="Ding Y."/>
            <person name="Dinh H."/>
            <person name="Dodsworth S."/>
            <person name="Draper H."/>
            <person name="Dugan-Rocha S."/>
            <person name="Dunham A."/>
            <person name="Dunn M."/>
            <person name="Durbin K.J."/>
            <person name="Dutta I."/>
            <person name="Eades T."/>
            <person name="Ellwood M."/>
            <person name="Emery-Cohen A."/>
            <person name="Errington H."/>
            <person name="Evans K.L."/>
            <person name="Faulkner L."/>
            <person name="Francis F."/>
            <person name="Frankland J."/>
            <person name="Fraser A.E."/>
            <person name="Galgoczy P."/>
            <person name="Gilbert J."/>
            <person name="Gill R."/>
            <person name="Gloeckner G."/>
            <person name="Gregory S.G."/>
            <person name="Gribble S."/>
            <person name="Griffiths C."/>
            <person name="Grocock R."/>
            <person name="Gu Y."/>
            <person name="Gwilliam R."/>
            <person name="Hamilton C."/>
            <person name="Hart E.A."/>
            <person name="Hawes A."/>
            <person name="Heath P.D."/>
            <person name="Heitmann K."/>
            <person name="Hennig S."/>
            <person name="Hernandez J."/>
            <person name="Hinzmann B."/>
            <person name="Ho S."/>
            <person name="Hoffs M."/>
            <person name="Howden P.J."/>
            <person name="Huckle E.J."/>
            <person name="Hume J."/>
            <person name="Hunt P.J."/>
            <person name="Hunt A.R."/>
            <person name="Isherwood J."/>
            <person name="Jacob L."/>
            <person name="Johnson D."/>
            <person name="Jones S."/>
            <person name="de Jong P.J."/>
            <person name="Joseph S.S."/>
            <person name="Keenan S."/>
            <person name="Kelly S."/>
            <person name="Kershaw J.K."/>
            <person name="Khan Z."/>
            <person name="Kioschis P."/>
            <person name="Klages S."/>
            <person name="Knights A.J."/>
            <person name="Kosiura A."/>
            <person name="Kovar-Smith C."/>
            <person name="Laird G.K."/>
            <person name="Langford C."/>
            <person name="Lawlor S."/>
            <person name="Leversha M."/>
            <person name="Lewis L."/>
            <person name="Liu W."/>
            <person name="Lloyd C."/>
            <person name="Lloyd D.M."/>
            <person name="Loulseged H."/>
            <person name="Loveland J.E."/>
            <person name="Lovell J.D."/>
            <person name="Lozado R."/>
            <person name="Lu J."/>
            <person name="Lyne R."/>
            <person name="Ma J."/>
            <person name="Maheshwari M."/>
            <person name="Matthews L.H."/>
            <person name="McDowall J."/>
            <person name="McLaren S."/>
            <person name="McMurray A."/>
            <person name="Meidl P."/>
            <person name="Meitinger T."/>
            <person name="Milne S."/>
            <person name="Miner G."/>
            <person name="Mistry S.L."/>
            <person name="Morgan M."/>
            <person name="Morris S."/>
            <person name="Mueller I."/>
            <person name="Mullikin J.C."/>
            <person name="Nguyen N."/>
            <person name="Nordsiek G."/>
            <person name="Nyakatura G."/>
            <person name="O'dell C.N."/>
            <person name="Okwuonu G."/>
            <person name="Palmer S."/>
            <person name="Pandian R."/>
            <person name="Parker D."/>
            <person name="Parrish J."/>
            <person name="Pasternak S."/>
            <person name="Patel D."/>
            <person name="Pearce A.V."/>
            <person name="Pearson D.M."/>
            <person name="Pelan S.E."/>
            <person name="Perez L."/>
            <person name="Porter K.M."/>
            <person name="Ramsey Y."/>
            <person name="Reichwald K."/>
            <person name="Rhodes S."/>
            <person name="Ridler K.A."/>
            <person name="Schlessinger D."/>
            <person name="Schueler M.G."/>
            <person name="Sehra H.K."/>
            <person name="Shaw-Smith C."/>
            <person name="Shen H."/>
            <person name="Sheridan E.M."/>
            <person name="Shownkeen R."/>
            <person name="Skuce C.D."/>
            <person name="Smith M.L."/>
            <person name="Sotheran E.C."/>
            <person name="Steingruber H.E."/>
            <person name="Steward C.A."/>
            <person name="Storey R."/>
            <person name="Swann R.M."/>
            <person name="Swarbreck D."/>
            <person name="Tabor P.E."/>
            <person name="Taudien S."/>
            <person name="Taylor T."/>
            <person name="Teague B."/>
            <person name="Thomas K."/>
            <person name="Thorpe A."/>
            <person name="Timms K."/>
            <person name="Tracey A."/>
            <person name="Trevanion S."/>
            <person name="Tromans A.C."/>
            <person name="d'Urso M."/>
            <person name="Verduzco D."/>
            <person name="Villasana D."/>
            <person name="Waldron L."/>
            <person name="Wall M."/>
            <person name="Wang Q."/>
            <person name="Warren J."/>
            <person name="Warry G.L."/>
            <person name="Wei X."/>
            <person name="West A."/>
            <person name="Whitehead S.L."/>
            <person name="Whiteley M.N."/>
            <person name="Wilkinson J.E."/>
            <person name="Willey D.L."/>
            <person name="Williams G."/>
            <person name="Williams L."/>
            <person name="Williamson A."/>
            <person name="Williamson H."/>
            <person name="Wilming L."/>
            <person name="Woodmansey R.L."/>
            <person name="Wray P.W."/>
            <person name="Yen J."/>
            <person name="Zhang J."/>
            <person name="Zhou J."/>
            <person name="Zoghbi H."/>
            <person name="Zorilla S."/>
            <person name="Buck D."/>
            <person name="Reinhardt R."/>
            <person name="Poustka A."/>
            <person name="Rosenthal A."/>
            <person name="Lehrach H."/>
            <person name="Meindl A."/>
            <person name="Minx P.J."/>
            <person name="Hillier L.W."/>
            <person name="Willard H.F."/>
            <person name="Wilson R.K."/>
            <person name="Waterston R.H."/>
            <person name="Rice C.M."/>
            <person name="Vaudin M."/>
            <person name="Coulson A."/>
            <person name="Nelson D.L."/>
            <person name="Weinstock G."/>
            <person name="Sulston J.E."/>
            <person name="Durbin R.M."/>
            <person name="Hubbard T."/>
            <person name="Gibbs R.A."/>
            <person name="Beck S."/>
            <person name="Rogers J."/>
            <person name="Bentley D.R."/>
        </authorList>
    </citation>
    <scope>NUCLEOTIDE SEQUENCE [LARGE SCALE GENOMIC DNA]</scope>
</reference>
<dbReference type="EMBL" id="AF285598">
    <property type="protein sequence ID" value="AAK31977.1"/>
    <property type="molecule type" value="mRNA"/>
</dbReference>
<dbReference type="EMBL" id="AL034399">
    <property type="status" value="NOT_ANNOTATED_CDS"/>
    <property type="molecule type" value="Genomic_DNA"/>
</dbReference>
<dbReference type="CCDS" id="CCDS14534.1"/>
<dbReference type="RefSeq" id="NP_112563.1">
    <property type="nucleotide sequence ID" value="NM_031273.2"/>
</dbReference>
<dbReference type="SMR" id="Q9BXU2"/>
<dbReference type="BioGRID" id="121090">
    <property type="interactions" value="168"/>
</dbReference>
<dbReference type="FunCoup" id="Q9BXU2">
    <property type="interactions" value="1"/>
</dbReference>
<dbReference type="IntAct" id="Q9BXU2">
    <property type="interactions" value="19"/>
</dbReference>
<dbReference type="STRING" id="9606.ENSP00000303777"/>
<dbReference type="iPTMnet" id="Q9BXU2"/>
<dbReference type="PhosphoSitePlus" id="Q9BXU2"/>
<dbReference type="BioMuta" id="TEX13B"/>
<dbReference type="DMDM" id="50401670"/>
<dbReference type="jPOST" id="Q9BXU2"/>
<dbReference type="MassIVE" id="Q9BXU2"/>
<dbReference type="PaxDb" id="9606-ENSP00000303777"/>
<dbReference type="PeptideAtlas" id="Q9BXU2"/>
<dbReference type="TopDownProteomics" id="Q9BXU2"/>
<dbReference type="Antibodypedia" id="29357">
    <property type="antibodies" value="78 antibodies from 17 providers"/>
</dbReference>
<dbReference type="DNASU" id="56156"/>
<dbReference type="Ensembl" id="ENST00000302917.1">
    <property type="protein sequence ID" value="ENSP00000303777.1"/>
    <property type="gene ID" value="ENSG00000170925.3"/>
</dbReference>
<dbReference type="GeneID" id="56156"/>
<dbReference type="KEGG" id="hsa:56156"/>
<dbReference type="MANE-Select" id="ENST00000302917.1">
    <property type="protein sequence ID" value="ENSP00000303777.1"/>
    <property type="RefSeq nucleotide sequence ID" value="NM_031273.2"/>
    <property type="RefSeq protein sequence ID" value="NP_112563.1"/>
</dbReference>
<dbReference type="UCSC" id="uc004enn.1">
    <property type="organism name" value="human"/>
</dbReference>
<dbReference type="AGR" id="HGNC:11736"/>
<dbReference type="CTD" id="56156"/>
<dbReference type="GeneCards" id="TEX13B"/>
<dbReference type="HGNC" id="HGNC:11736">
    <property type="gene designation" value="TEX13B"/>
</dbReference>
<dbReference type="HPA" id="ENSG00000170925">
    <property type="expression patterns" value="Not detected"/>
</dbReference>
<dbReference type="MIM" id="300313">
    <property type="type" value="gene"/>
</dbReference>
<dbReference type="neXtProt" id="NX_Q9BXU2"/>
<dbReference type="OpenTargets" id="ENSG00000170925"/>
<dbReference type="PharmGKB" id="PA36453"/>
<dbReference type="VEuPathDB" id="HostDB:ENSG00000170925"/>
<dbReference type="eggNOG" id="ENOG502RWXQ">
    <property type="taxonomic scope" value="Eukaryota"/>
</dbReference>
<dbReference type="GeneTree" id="ENSGT00940000161342"/>
<dbReference type="HOGENOM" id="CLU_080055_0_0_1"/>
<dbReference type="InParanoid" id="Q9BXU2"/>
<dbReference type="OMA" id="MLRWKLL"/>
<dbReference type="OrthoDB" id="448399at2759"/>
<dbReference type="PAN-GO" id="Q9BXU2">
    <property type="GO annotations" value="2 GO annotations based on evolutionary models"/>
</dbReference>
<dbReference type="PhylomeDB" id="Q9BXU2"/>
<dbReference type="TreeFam" id="TF337208"/>
<dbReference type="PathwayCommons" id="Q9BXU2"/>
<dbReference type="SignaLink" id="Q9BXU2"/>
<dbReference type="BioGRID-ORCS" id="56156">
    <property type="hits" value="24 hits in 762 CRISPR screens"/>
</dbReference>
<dbReference type="GenomeRNAi" id="56156"/>
<dbReference type="Pharos" id="Q9BXU2">
    <property type="development level" value="Tdark"/>
</dbReference>
<dbReference type="PRO" id="PR:Q9BXU2"/>
<dbReference type="Proteomes" id="UP000005640">
    <property type="component" value="Chromosome X"/>
</dbReference>
<dbReference type="RNAct" id="Q9BXU2">
    <property type="molecule type" value="protein"/>
</dbReference>
<dbReference type="Bgee" id="ENSG00000170925">
    <property type="expression patterns" value="Expressed in male germ line stem cell (sensu Vertebrata) in testis and 3 other cell types or tissues"/>
</dbReference>
<dbReference type="GO" id="GO:0003729">
    <property type="term" value="F:mRNA binding"/>
    <property type="evidence" value="ECO:0000318"/>
    <property type="project" value="GO_Central"/>
</dbReference>
<dbReference type="InterPro" id="IPR028193">
    <property type="entry name" value="TEX13A-D_N"/>
</dbReference>
<dbReference type="InterPro" id="IPR054602">
    <property type="entry name" value="TEX13A/B_middle"/>
</dbReference>
<dbReference type="InterPro" id="IPR055047">
    <property type="entry name" value="TEX13B_C"/>
</dbReference>
<dbReference type="PANTHER" id="PTHR23111:SF94">
    <property type="entry name" value="TESTIS-EXPRESSED PROTEIN 13B"/>
    <property type="match status" value="1"/>
</dbReference>
<dbReference type="PANTHER" id="PTHR23111">
    <property type="entry name" value="ZINC FINGER PROTEIN"/>
    <property type="match status" value="1"/>
</dbReference>
<dbReference type="Pfam" id="PF15186">
    <property type="entry name" value="TEX13"/>
    <property type="match status" value="1"/>
</dbReference>
<dbReference type="Pfam" id="PF22835">
    <property type="entry name" value="TEX13B-like_middle"/>
    <property type="match status" value="1"/>
</dbReference>
<dbReference type="Pfam" id="PF22836">
    <property type="entry name" value="TEX13B_C"/>
    <property type="match status" value="1"/>
</dbReference>
<keyword id="KW-1267">Proteomics identification</keyword>
<keyword id="KW-1185">Reference proteome</keyword>
<proteinExistence type="evidence at protein level"/>
<name>TX13B_HUMAN</name>
<accession>Q9BXU2</accession>
<accession>Q5JYF6</accession>
<comment type="interaction">
    <interactant intactId="EBI-12007066">
        <id>Q9BXU2</id>
    </interactant>
    <interactant intactId="EBI-744820">
        <id>Q9UM19</id>
        <label>HPCAL4</label>
    </interactant>
    <organismsDiffer>false</organismsDiffer>
    <experiments>3</experiments>
</comment>
<comment type="interaction">
    <interactant intactId="EBI-12007066">
        <id>Q9BXU2</id>
    </interactant>
    <interactant intactId="EBI-740943">
        <id>P62760</id>
        <label>VSNL1</label>
    </interactant>
    <organismsDiffer>false</organismsDiffer>
    <experiments>8</experiments>
</comment>
<comment type="tissue specificity">
    <text>Testis specific.</text>
</comment>
<comment type="similarity">
    <text>Belongs to the TEX13 family.</text>
</comment>
<organism>
    <name type="scientific">Homo sapiens</name>
    <name type="common">Human</name>
    <dbReference type="NCBI Taxonomy" id="9606"/>
    <lineage>
        <taxon>Eukaryota</taxon>
        <taxon>Metazoa</taxon>
        <taxon>Chordata</taxon>
        <taxon>Craniata</taxon>
        <taxon>Vertebrata</taxon>
        <taxon>Euteleostomi</taxon>
        <taxon>Mammalia</taxon>
        <taxon>Eutheria</taxon>
        <taxon>Euarchontoglires</taxon>
        <taxon>Primates</taxon>
        <taxon>Haplorrhini</taxon>
        <taxon>Catarrhini</taxon>
        <taxon>Hominidae</taxon>
        <taxon>Homo</taxon>
    </lineage>
</organism>
<protein>
    <recommendedName>
        <fullName>Testis-expressed protein 13B</fullName>
    </recommendedName>
</protein>